<accession>P29903</accession>
<protein>
    <recommendedName>
        <fullName>Protein MoxZ</fullName>
    </recommendedName>
</protein>
<name>MOXZ_PARDE</name>
<feature type="chain" id="PRO_0000096545" description="Protein MoxZ">
    <location>
        <begin position="1"/>
        <end position="154"/>
    </location>
</feature>
<keyword id="KW-0485">Methanol utilization</keyword>
<sequence length="154" mass="16430">MRFCRGTVLGRSAAGMAVLLALGACYEEDDQTLPSAAPGESVAAESTHWLEIDDSRSPETFLSAESGLPAQTLAPLLGALSAHYRESPRMIANRVLQLWQEYPDTPLERIMADLVPARDAPEESLGPVAQQYRVLRAGGAGHADAVAAAMGQRE</sequence>
<organism>
    <name type="scientific">Paracoccus denitrificans</name>
    <dbReference type="NCBI Taxonomy" id="266"/>
    <lineage>
        <taxon>Bacteria</taxon>
        <taxon>Pseudomonadati</taxon>
        <taxon>Pseudomonadota</taxon>
        <taxon>Alphaproteobacteria</taxon>
        <taxon>Rhodobacterales</taxon>
        <taxon>Paracoccaceae</taxon>
        <taxon>Paracoccus</taxon>
    </lineage>
</organism>
<gene>
    <name type="primary">moxZ</name>
</gene>
<dbReference type="EMBL" id="M92421">
    <property type="protein sequence ID" value="AAC36996.1"/>
    <property type="molecule type" value="Unassigned_DNA"/>
</dbReference>
<dbReference type="PIR" id="S32870">
    <property type="entry name" value="S32870"/>
</dbReference>
<dbReference type="RefSeq" id="WP_011749264.1">
    <property type="nucleotide sequence ID" value="NZ_JAOSHR010000012.1"/>
</dbReference>
<dbReference type="GO" id="GO:0015945">
    <property type="term" value="P:methanol metabolic process"/>
    <property type="evidence" value="ECO:0007669"/>
    <property type="project" value="UniProtKB-KW"/>
</dbReference>
<dbReference type="PROSITE" id="PS51257">
    <property type="entry name" value="PROKAR_LIPOPROTEIN"/>
    <property type="match status" value="1"/>
</dbReference>
<reference key="1">
    <citation type="journal article" date="1993" name="Mol. Microbiol.">
        <title>Identification of a two-component regulatory system controlling methanol dehydrogenase synthesis in Paracoccus denitrificans.</title>
        <authorList>
            <person name="Harms N."/>
            <person name="Reijnders W.N."/>
            <person name="Anazawa H."/>
            <person name="de Palen C.J."/>
            <person name="van Spanning R.J.M."/>
            <person name="Oltmann L.F."/>
            <person name="Stouthamer A.H."/>
        </authorList>
    </citation>
    <scope>NUCLEOTIDE SEQUENCE [GENOMIC DNA]</scope>
</reference>
<proteinExistence type="predicted"/>